<name>RLMF_COLP3</name>
<evidence type="ECO:0000255" key="1">
    <source>
        <dbReference type="HAMAP-Rule" id="MF_01848"/>
    </source>
</evidence>
<reference key="1">
    <citation type="journal article" date="2005" name="Proc. Natl. Acad. Sci. U.S.A.">
        <title>The psychrophilic lifestyle as revealed by the genome sequence of Colwellia psychrerythraea 34H through genomic and proteomic analyses.</title>
        <authorList>
            <person name="Methe B.A."/>
            <person name="Nelson K.E."/>
            <person name="Deming J.W."/>
            <person name="Momen B."/>
            <person name="Melamud E."/>
            <person name="Zhang X."/>
            <person name="Moult J."/>
            <person name="Madupu R."/>
            <person name="Nelson W.C."/>
            <person name="Dodson R.J."/>
            <person name="Brinkac L.M."/>
            <person name="Daugherty S.C."/>
            <person name="Durkin A.S."/>
            <person name="DeBoy R.T."/>
            <person name="Kolonay J.F."/>
            <person name="Sullivan S.A."/>
            <person name="Zhou L."/>
            <person name="Davidsen T.M."/>
            <person name="Wu M."/>
            <person name="Huston A.L."/>
            <person name="Lewis M."/>
            <person name="Weaver B."/>
            <person name="Weidman J.F."/>
            <person name="Khouri H."/>
            <person name="Utterback T.R."/>
            <person name="Feldblyum T.V."/>
            <person name="Fraser C.M."/>
        </authorList>
    </citation>
    <scope>NUCLEOTIDE SEQUENCE [LARGE SCALE GENOMIC DNA]</scope>
    <source>
        <strain>34H / ATCC BAA-681</strain>
    </source>
</reference>
<gene>
    <name evidence="1" type="primary">rlmF</name>
    <name type="ordered locus">CPS_2268</name>
</gene>
<sequence>MHKKNRHNQGYNFTALVKAHPGLLQFIIKNQYNNQDTIDFANPQAVKALNLSLLKSEYHVKFWDIPDGYLCPAIPGRVDYIHHLQDLLAATPKTLLPNKTPINVLDIGTGASCIYPILGQREYDWHFVASDVDPISIKVAKHIISSDKSLNRNINCRLQPNSNQIFNGIIAEDEFYHLTICNPPFHSSLAEASKGTARKIKNLNKGNHSSKNQDKTLNFGGQKAELWCPGGELAFIGKMIKESKAYQKQVLWFTCLVSKKDHLSKLKLSLKKSDAKQIKVIDMAQGQKISRFIAWSFYDVN</sequence>
<proteinExistence type="inferred from homology"/>
<feature type="chain" id="PRO_0000349899" description="Ribosomal RNA large subunit methyltransferase F">
    <location>
        <begin position="1"/>
        <end position="301"/>
    </location>
</feature>
<dbReference type="EC" id="2.1.1.181" evidence="1"/>
<dbReference type="EMBL" id="CP000083">
    <property type="protein sequence ID" value="AAZ28550.1"/>
    <property type="molecule type" value="Genomic_DNA"/>
</dbReference>
<dbReference type="RefSeq" id="WP_011043082.1">
    <property type="nucleotide sequence ID" value="NC_003910.7"/>
</dbReference>
<dbReference type="SMR" id="Q482M9"/>
<dbReference type="STRING" id="167879.CPS_2268"/>
<dbReference type="KEGG" id="cps:CPS_2268"/>
<dbReference type="HOGENOM" id="CLU_027534_3_0_6"/>
<dbReference type="Proteomes" id="UP000000547">
    <property type="component" value="Chromosome"/>
</dbReference>
<dbReference type="GO" id="GO:0005737">
    <property type="term" value="C:cytoplasm"/>
    <property type="evidence" value="ECO:0007669"/>
    <property type="project" value="UniProtKB-SubCell"/>
</dbReference>
<dbReference type="GO" id="GO:0052907">
    <property type="term" value="F:23S rRNA (adenine(1618)-N(6))-methyltransferase activity"/>
    <property type="evidence" value="ECO:0007669"/>
    <property type="project" value="UniProtKB-EC"/>
</dbReference>
<dbReference type="GO" id="GO:0070475">
    <property type="term" value="P:rRNA base methylation"/>
    <property type="evidence" value="ECO:0007669"/>
    <property type="project" value="TreeGrafter"/>
</dbReference>
<dbReference type="CDD" id="cd02440">
    <property type="entry name" value="AdoMet_MTases"/>
    <property type="match status" value="1"/>
</dbReference>
<dbReference type="Gene3D" id="3.40.50.150">
    <property type="entry name" value="Vaccinia Virus protein VP39"/>
    <property type="match status" value="1"/>
</dbReference>
<dbReference type="HAMAP" id="MF_01848">
    <property type="entry name" value="23SrRNA_methyltr_F"/>
    <property type="match status" value="1"/>
</dbReference>
<dbReference type="InterPro" id="IPR010286">
    <property type="entry name" value="METTL16/RlmF"/>
</dbReference>
<dbReference type="InterPro" id="IPR016909">
    <property type="entry name" value="rRNA_lsu_MeTfrase_F"/>
</dbReference>
<dbReference type="InterPro" id="IPR029063">
    <property type="entry name" value="SAM-dependent_MTases_sf"/>
</dbReference>
<dbReference type="NCBIfam" id="NF008725">
    <property type="entry name" value="PRK11727.1"/>
    <property type="match status" value="1"/>
</dbReference>
<dbReference type="PANTHER" id="PTHR13393:SF0">
    <property type="entry name" value="RNA N6-ADENOSINE-METHYLTRANSFERASE METTL16"/>
    <property type="match status" value="1"/>
</dbReference>
<dbReference type="PANTHER" id="PTHR13393">
    <property type="entry name" value="SAM-DEPENDENT METHYLTRANSFERASE"/>
    <property type="match status" value="1"/>
</dbReference>
<dbReference type="Pfam" id="PF05971">
    <property type="entry name" value="Methyltransf_10"/>
    <property type="match status" value="1"/>
</dbReference>
<dbReference type="PIRSF" id="PIRSF029038">
    <property type="entry name" value="Mtase_YbiN_prd"/>
    <property type="match status" value="1"/>
</dbReference>
<dbReference type="SUPFAM" id="SSF53335">
    <property type="entry name" value="S-adenosyl-L-methionine-dependent methyltransferases"/>
    <property type="match status" value="1"/>
</dbReference>
<protein>
    <recommendedName>
        <fullName evidence="1">Ribosomal RNA large subunit methyltransferase F</fullName>
        <ecNumber evidence="1">2.1.1.181</ecNumber>
    </recommendedName>
    <alternativeName>
        <fullName evidence="1">23S rRNA mA1618 methyltransferase</fullName>
    </alternativeName>
    <alternativeName>
        <fullName evidence="1">rRNA adenine N-6-methyltransferase</fullName>
    </alternativeName>
</protein>
<keyword id="KW-0963">Cytoplasm</keyword>
<keyword id="KW-0489">Methyltransferase</keyword>
<keyword id="KW-0698">rRNA processing</keyword>
<keyword id="KW-0949">S-adenosyl-L-methionine</keyword>
<keyword id="KW-0808">Transferase</keyword>
<comment type="function">
    <text evidence="1">Specifically methylates the adenine in position 1618 of 23S rRNA.</text>
</comment>
<comment type="catalytic activity">
    <reaction evidence="1">
        <text>adenosine(1618) in 23S rRNA + S-adenosyl-L-methionine = N(6)-methyladenosine(1618) in 23S rRNA + S-adenosyl-L-homocysteine + H(+)</text>
        <dbReference type="Rhea" id="RHEA:16497"/>
        <dbReference type="Rhea" id="RHEA-COMP:10229"/>
        <dbReference type="Rhea" id="RHEA-COMP:10231"/>
        <dbReference type="ChEBI" id="CHEBI:15378"/>
        <dbReference type="ChEBI" id="CHEBI:57856"/>
        <dbReference type="ChEBI" id="CHEBI:59789"/>
        <dbReference type="ChEBI" id="CHEBI:74411"/>
        <dbReference type="ChEBI" id="CHEBI:74449"/>
        <dbReference type="EC" id="2.1.1.181"/>
    </reaction>
</comment>
<comment type="subcellular location">
    <subcellularLocation>
        <location evidence="1">Cytoplasm</location>
    </subcellularLocation>
</comment>
<comment type="similarity">
    <text evidence="1">Belongs to the methyltransferase superfamily. METTL16/RlmF family.</text>
</comment>
<accession>Q482M9</accession>
<organism>
    <name type="scientific">Colwellia psychrerythraea (strain 34H / ATCC BAA-681)</name>
    <name type="common">Vibrio psychroerythus</name>
    <dbReference type="NCBI Taxonomy" id="167879"/>
    <lineage>
        <taxon>Bacteria</taxon>
        <taxon>Pseudomonadati</taxon>
        <taxon>Pseudomonadota</taxon>
        <taxon>Gammaproteobacteria</taxon>
        <taxon>Alteromonadales</taxon>
        <taxon>Colwelliaceae</taxon>
        <taxon>Colwellia</taxon>
    </lineage>
</organism>